<proteinExistence type="inferred from homology"/>
<protein>
    <recommendedName>
        <fullName evidence="1">3-isopropylmalate dehydratase small subunit</fullName>
        <ecNumber evidence="1">4.2.1.33</ecNumber>
    </recommendedName>
    <alternativeName>
        <fullName evidence="1">Alpha-IPM isomerase</fullName>
        <shortName evidence="1">IPMI</shortName>
    </alternativeName>
    <alternativeName>
        <fullName evidence="1">Isopropylmalate isomerase</fullName>
    </alternativeName>
</protein>
<comment type="function">
    <text evidence="1">Catalyzes the isomerization between 2-isopropylmalate and 3-isopropylmalate, via the formation of 2-isopropylmaleate.</text>
</comment>
<comment type="catalytic activity">
    <reaction evidence="1">
        <text>(2R,3S)-3-isopropylmalate = (2S)-2-isopropylmalate</text>
        <dbReference type="Rhea" id="RHEA:32287"/>
        <dbReference type="ChEBI" id="CHEBI:1178"/>
        <dbReference type="ChEBI" id="CHEBI:35121"/>
        <dbReference type="EC" id="4.2.1.33"/>
    </reaction>
</comment>
<comment type="pathway">
    <text evidence="1">Amino-acid biosynthesis; L-leucine biosynthesis; L-leucine from 3-methyl-2-oxobutanoate: step 2/4.</text>
</comment>
<comment type="subunit">
    <text evidence="1">Heterodimer of LeuC and LeuD.</text>
</comment>
<comment type="similarity">
    <text evidence="1">Belongs to the LeuD family. LeuD type 1 subfamily.</text>
</comment>
<keyword id="KW-0028">Amino-acid biosynthesis</keyword>
<keyword id="KW-0100">Branched-chain amino acid biosynthesis</keyword>
<keyword id="KW-0432">Leucine biosynthesis</keyword>
<keyword id="KW-0456">Lyase</keyword>
<organism>
    <name type="scientific">Vibrio cholerae serotype O1 (strain M66-2)</name>
    <dbReference type="NCBI Taxonomy" id="579112"/>
    <lineage>
        <taxon>Bacteria</taxon>
        <taxon>Pseudomonadati</taxon>
        <taxon>Pseudomonadota</taxon>
        <taxon>Gammaproteobacteria</taxon>
        <taxon>Vibrionales</taxon>
        <taxon>Vibrionaceae</taxon>
        <taxon>Vibrio</taxon>
    </lineage>
</organism>
<gene>
    <name evidence="1" type="primary">leuD</name>
    <name type="ordered locus">VCM66_2415</name>
</gene>
<reference key="1">
    <citation type="journal article" date="2008" name="PLoS ONE">
        <title>A recalibrated molecular clock and independent origins for the cholera pandemic clones.</title>
        <authorList>
            <person name="Feng L."/>
            <person name="Reeves P.R."/>
            <person name="Lan R."/>
            <person name="Ren Y."/>
            <person name="Gao C."/>
            <person name="Zhou Z."/>
            <person name="Ren Y."/>
            <person name="Cheng J."/>
            <person name="Wang W."/>
            <person name="Wang J."/>
            <person name="Qian W."/>
            <person name="Li D."/>
            <person name="Wang L."/>
        </authorList>
    </citation>
    <scope>NUCLEOTIDE SEQUENCE [LARGE SCALE GENOMIC DNA]</scope>
    <source>
        <strain>M66-2</strain>
    </source>
</reference>
<feature type="chain" id="PRO_1000149426" description="3-isopropylmalate dehydratase small subunit">
    <location>
        <begin position="1"/>
        <end position="200"/>
    </location>
</feature>
<sequence>MSGFQQHTGLVVPLDAANVDTDAIIPKQFLQKVNRTGFGKHLFHDWRFLDDAGEKANPEFVMNQPRYQDASILLARENFGCGSSREHAPWALADYGIRVMIAPSFADIFYGNSINNQMVPVRLTEQEVDELFTYVHDTEGATITVDLEALSVTANGKTYHFEIDDFRRHCLLNGLDNIGLTLQHEAKIAEYEAKIPSFLK</sequence>
<dbReference type="EC" id="4.2.1.33" evidence="1"/>
<dbReference type="EMBL" id="CP001233">
    <property type="protein sequence ID" value="ACP06713.1"/>
    <property type="molecule type" value="Genomic_DNA"/>
</dbReference>
<dbReference type="RefSeq" id="WP_000012771.1">
    <property type="nucleotide sequence ID" value="NC_012578.1"/>
</dbReference>
<dbReference type="SMR" id="C3LR35"/>
<dbReference type="KEGG" id="vcm:VCM66_2415"/>
<dbReference type="HOGENOM" id="CLU_081378_0_3_6"/>
<dbReference type="UniPathway" id="UPA00048">
    <property type="reaction ID" value="UER00071"/>
</dbReference>
<dbReference type="Proteomes" id="UP000001217">
    <property type="component" value="Chromosome I"/>
</dbReference>
<dbReference type="GO" id="GO:0009316">
    <property type="term" value="C:3-isopropylmalate dehydratase complex"/>
    <property type="evidence" value="ECO:0007669"/>
    <property type="project" value="InterPro"/>
</dbReference>
<dbReference type="GO" id="GO:0003861">
    <property type="term" value="F:3-isopropylmalate dehydratase activity"/>
    <property type="evidence" value="ECO:0007669"/>
    <property type="project" value="UniProtKB-UniRule"/>
</dbReference>
<dbReference type="GO" id="GO:0009098">
    <property type="term" value="P:L-leucine biosynthetic process"/>
    <property type="evidence" value="ECO:0007669"/>
    <property type="project" value="UniProtKB-UniRule"/>
</dbReference>
<dbReference type="CDD" id="cd01577">
    <property type="entry name" value="IPMI_Swivel"/>
    <property type="match status" value="1"/>
</dbReference>
<dbReference type="FunFam" id="3.20.19.10:FF:000003">
    <property type="entry name" value="3-isopropylmalate dehydratase small subunit"/>
    <property type="match status" value="1"/>
</dbReference>
<dbReference type="Gene3D" id="3.20.19.10">
    <property type="entry name" value="Aconitase, domain 4"/>
    <property type="match status" value="1"/>
</dbReference>
<dbReference type="HAMAP" id="MF_01031">
    <property type="entry name" value="LeuD_type1"/>
    <property type="match status" value="1"/>
</dbReference>
<dbReference type="InterPro" id="IPR004431">
    <property type="entry name" value="3-IsopropMal_deHydase_ssu"/>
</dbReference>
<dbReference type="InterPro" id="IPR015928">
    <property type="entry name" value="Aconitase/3IPM_dehydase_swvl"/>
</dbReference>
<dbReference type="InterPro" id="IPR000573">
    <property type="entry name" value="AconitaseA/IPMdHydase_ssu_swvl"/>
</dbReference>
<dbReference type="InterPro" id="IPR033940">
    <property type="entry name" value="IPMI_Swivel"/>
</dbReference>
<dbReference type="InterPro" id="IPR050075">
    <property type="entry name" value="LeuD"/>
</dbReference>
<dbReference type="NCBIfam" id="TIGR00171">
    <property type="entry name" value="leuD"/>
    <property type="match status" value="1"/>
</dbReference>
<dbReference type="NCBIfam" id="NF002458">
    <property type="entry name" value="PRK01641.1"/>
    <property type="match status" value="1"/>
</dbReference>
<dbReference type="PANTHER" id="PTHR43345:SF5">
    <property type="entry name" value="3-ISOPROPYLMALATE DEHYDRATASE SMALL SUBUNIT"/>
    <property type="match status" value="1"/>
</dbReference>
<dbReference type="PANTHER" id="PTHR43345">
    <property type="entry name" value="3-ISOPROPYLMALATE DEHYDRATASE SMALL SUBUNIT 2-RELATED-RELATED"/>
    <property type="match status" value="1"/>
</dbReference>
<dbReference type="Pfam" id="PF00694">
    <property type="entry name" value="Aconitase_C"/>
    <property type="match status" value="1"/>
</dbReference>
<dbReference type="SUPFAM" id="SSF52016">
    <property type="entry name" value="LeuD/IlvD-like"/>
    <property type="match status" value="1"/>
</dbReference>
<accession>C3LR35</accession>
<evidence type="ECO:0000255" key="1">
    <source>
        <dbReference type="HAMAP-Rule" id="MF_01031"/>
    </source>
</evidence>
<name>LEUD_VIBCM</name>